<comment type="function">
    <text evidence="1">Located at the top of the head of the 30S subunit, it contacts several helices of the 16S rRNA. In the 70S ribosome it contacts the 23S rRNA (bridge B1a) and protein L5 of the 50S subunit (bridge B1b), connecting the 2 subunits; these bridges are implicated in subunit movement. Contacts the tRNAs in the A and P-sites.</text>
</comment>
<comment type="subunit">
    <text evidence="1">Part of the 30S ribosomal subunit. Forms a loose heterodimer with protein S19. Forms two bridges to the 50S subunit in the 70S ribosome.</text>
</comment>
<comment type="similarity">
    <text evidence="1">Belongs to the universal ribosomal protein uS13 family.</text>
</comment>
<organism>
    <name type="scientific">Heliobacterium modesticaldum (strain ATCC 51547 / Ice1)</name>
    <dbReference type="NCBI Taxonomy" id="498761"/>
    <lineage>
        <taxon>Bacteria</taxon>
        <taxon>Bacillati</taxon>
        <taxon>Bacillota</taxon>
        <taxon>Clostridia</taxon>
        <taxon>Eubacteriales</taxon>
        <taxon>Heliobacteriaceae</taxon>
        <taxon>Heliomicrobium</taxon>
    </lineage>
</organism>
<dbReference type="EMBL" id="CP000930">
    <property type="protein sequence ID" value="ABZ83981.1"/>
    <property type="molecule type" value="Genomic_DNA"/>
</dbReference>
<dbReference type="RefSeq" id="WP_012282497.1">
    <property type="nucleotide sequence ID" value="NC_010337.2"/>
</dbReference>
<dbReference type="SMR" id="B0TC82"/>
<dbReference type="STRING" id="498761.HM1_1404"/>
<dbReference type="KEGG" id="hmo:HM1_1404"/>
<dbReference type="eggNOG" id="COG0099">
    <property type="taxonomic scope" value="Bacteria"/>
</dbReference>
<dbReference type="HOGENOM" id="CLU_103849_1_2_9"/>
<dbReference type="OrthoDB" id="9803610at2"/>
<dbReference type="Proteomes" id="UP000008550">
    <property type="component" value="Chromosome"/>
</dbReference>
<dbReference type="GO" id="GO:0005829">
    <property type="term" value="C:cytosol"/>
    <property type="evidence" value="ECO:0007669"/>
    <property type="project" value="TreeGrafter"/>
</dbReference>
<dbReference type="GO" id="GO:0015935">
    <property type="term" value="C:small ribosomal subunit"/>
    <property type="evidence" value="ECO:0007669"/>
    <property type="project" value="TreeGrafter"/>
</dbReference>
<dbReference type="GO" id="GO:0019843">
    <property type="term" value="F:rRNA binding"/>
    <property type="evidence" value="ECO:0007669"/>
    <property type="project" value="UniProtKB-UniRule"/>
</dbReference>
<dbReference type="GO" id="GO:0003735">
    <property type="term" value="F:structural constituent of ribosome"/>
    <property type="evidence" value="ECO:0007669"/>
    <property type="project" value="InterPro"/>
</dbReference>
<dbReference type="GO" id="GO:0000049">
    <property type="term" value="F:tRNA binding"/>
    <property type="evidence" value="ECO:0007669"/>
    <property type="project" value="UniProtKB-UniRule"/>
</dbReference>
<dbReference type="GO" id="GO:0006412">
    <property type="term" value="P:translation"/>
    <property type="evidence" value="ECO:0007669"/>
    <property type="project" value="UniProtKB-UniRule"/>
</dbReference>
<dbReference type="FunFam" id="1.10.8.50:FF:000001">
    <property type="entry name" value="30S ribosomal protein S13"/>
    <property type="match status" value="1"/>
</dbReference>
<dbReference type="FunFam" id="4.10.910.10:FF:000001">
    <property type="entry name" value="30S ribosomal protein S13"/>
    <property type="match status" value="1"/>
</dbReference>
<dbReference type="Gene3D" id="1.10.8.50">
    <property type="match status" value="1"/>
</dbReference>
<dbReference type="Gene3D" id="4.10.910.10">
    <property type="entry name" value="30s ribosomal protein s13, domain 2"/>
    <property type="match status" value="1"/>
</dbReference>
<dbReference type="HAMAP" id="MF_01315">
    <property type="entry name" value="Ribosomal_uS13"/>
    <property type="match status" value="1"/>
</dbReference>
<dbReference type="InterPro" id="IPR027437">
    <property type="entry name" value="Rbsml_uS13_C"/>
</dbReference>
<dbReference type="InterPro" id="IPR001892">
    <property type="entry name" value="Ribosomal_uS13"/>
</dbReference>
<dbReference type="InterPro" id="IPR010979">
    <property type="entry name" value="Ribosomal_uS13-like_H2TH"/>
</dbReference>
<dbReference type="InterPro" id="IPR019980">
    <property type="entry name" value="Ribosomal_uS13_bac-type"/>
</dbReference>
<dbReference type="InterPro" id="IPR018269">
    <property type="entry name" value="Ribosomal_uS13_CS"/>
</dbReference>
<dbReference type="NCBIfam" id="TIGR03631">
    <property type="entry name" value="uS13_bact"/>
    <property type="match status" value="1"/>
</dbReference>
<dbReference type="PANTHER" id="PTHR10871">
    <property type="entry name" value="30S RIBOSOMAL PROTEIN S13/40S RIBOSOMAL PROTEIN S18"/>
    <property type="match status" value="1"/>
</dbReference>
<dbReference type="PANTHER" id="PTHR10871:SF1">
    <property type="entry name" value="SMALL RIBOSOMAL SUBUNIT PROTEIN US13M"/>
    <property type="match status" value="1"/>
</dbReference>
<dbReference type="Pfam" id="PF00416">
    <property type="entry name" value="Ribosomal_S13"/>
    <property type="match status" value="1"/>
</dbReference>
<dbReference type="PIRSF" id="PIRSF002134">
    <property type="entry name" value="Ribosomal_S13"/>
    <property type="match status" value="1"/>
</dbReference>
<dbReference type="SUPFAM" id="SSF46946">
    <property type="entry name" value="S13-like H2TH domain"/>
    <property type="match status" value="1"/>
</dbReference>
<dbReference type="PROSITE" id="PS00646">
    <property type="entry name" value="RIBOSOMAL_S13_1"/>
    <property type="match status" value="1"/>
</dbReference>
<dbReference type="PROSITE" id="PS50159">
    <property type="entry name" value="RIBOSOMAL_S13_2"/>
    <property type="match status" value="1"/>
</dbReference>
<reference key="1">
    <citation type="journal article" date="2008" name="J. Bacteriol.">
        <title>The genome of Heliobacterium modesticaldum, a phototrophic representative of the Firmicutes containing the simplest photosynthetic apparatus.</title>
        <authorList>
            <person name="Sattley W.M."/>
            <person name="Madigan M.T."/>
            <person name="Swingley W.D."/>
            <person name="Cheung P.C."/>
            <person name="Clocksin K.M."/>
            <person name="Conrad A.L."/>
            <person name="Dejesa L.C."/>
            <person name="Honchak B.M."/>
            <person name="Jung D.O."/>
            <person name="Karbach L.E."/>
            <person name="Kurdoglu A."/>
            <person name="Lahiri S."/>
            <person name="Mastrian S.D."/>
            <person name="Page L.E."/>
            <person name="Taylor H.L."/>
            <person name="Wang Z.T."/>
            <person name="Raymond J."/>
            <person name="Chen M."/>
            <person name="Blankenship R.E."/>
            <person name="Touchman J.W."/>
        </authorList>
    </citation>
    <scope>NUCLEOTIDE SEQUENCE [LARGE SCALE GENOMIC DNA]</scope>
    <source>
        <strain>ATCC 51547 / Ice1</strain>
    </source>
</reference>
<accession>B0TC82</accession>
<feature type="chain" id="PRO_1000141268" description="Small ribosomal subunit protein uS13">
    <location>
        <begin position="1"/>
        <end position="123"/>
    </location>
</feature>
<feature type="region of interest" description="Disordered" evidence="2">
    <location>
        <begin position="95"/>
        <end position="123"/>
    </location>
</feature>
<name>RS13_HELMI</name>
<protein>
    <recommendedName>
        <fullName evidence="1">Small ribosomal subunit protein uS13</fullName>
    </recommendedName>
    <alternativeName>
        <fullName evidence="3">30S ribosomal protein S13</fullName>
    </alternativeName>
</protein>
<proteinExistence type="inferred from homology"/>
<sequence>MARIAGIDLPRDKRIAIALTYIFGIGRPTADKILAETGINPDTRTRDLTDEEVARLREYIDKNVEVEGDLRREISLNIKRLMEIGCYRGLRHRRGLPVRGQRTKTNARTRKGPARTVAGKKKK</sequence>
<evidence type="ECO:0000255" key="1">
    <source>
        <dbReference type="HAMAP-Rule" id="MF_01315"/>
    </source>
</evidence>
<evidence type="ECO:0000256" key="2">
    <source>
        <dbReference type="SAM" id="MobiDB-lite"/>
    </source>
</evidence>
<evidence type="ECO:0000305" key="3"/>
<gene>
    <name evidence="1" type="primary">rpsM</name>
    <name type="ordered locus">Helmi_13560</name>
    <name type="ORF">HM1_1404</name>
</gene>
<keyword id="KW-1185">Reference proteome</keyword>
<keyword id="KW-0687">Ribonucleoprotein</keyword>
<keyword id="KW-0689">Ribosomal protein</keyword>
<keyword id="KW-0694">RNA-binding</keyword>
<keyword id="KW-0699">rRNA-binding</keyword>
<keyword id="KW-0820">tRNA-binding</keyword>